<name>TRMB_BIFLO</name>
<proteinExistence type="inferred from homology"/>
<comment type="function">
    <text evidence="2">Catalyzes the formation of N(7)-methylguanine at position 46 (m7G46) in tRNA.</text>
</comment>
<comment type="catalytic activity">
    <reaction evidence="2">
        <text>guanosine(46) in tRNA + S-adenosyl-L-methionine = N(7)-methylguanosine(46) in tRNA + S-adenosyl-L-homocysteine</text>
        <dbReference type="Rhea" id="RHEA:42708"/>
        <dbReference type="Rhea" id="RHEA-COMP:10188"/>
        <dbReference type="Rhea" id="RHEA-COMP:10189"/>
        <dbReference type="ChEBI" id="CHEBI:57856"/>
        <dbReference type="ChEBI" id="CHEBI:59789"/>
        <dbReference type="ChEBI" id="CHEBI:74269"/>
        <dbReference type="ChEBI" id="CHEBI:74480"/>
        <dbReference type="EC" id="2.1.1.33"/>
    </reaction>
</comment>
<comment type="pathway">
    <text evidence="2">tRNA modification; N(7)-methylguanine-tRNA biosynthesis.</text>
</comment>
<comment type="similarity">
    <text evidence="2">Belongs to the class I-like SAM-binding methyltransferase superfamily. TrmB family.</text>
</comment>
<gene>
    <name evidence="2" type="primary">trmB</name>
    <name type="ordered locus">BL1670</name>
</gene>
<sequence length="286" mass="31253">MTNPESTAIDPVAAMGTDHTEAPAHPLHKVLSFVRRSGRLDDRLQRAWDNYAGTYLLDIAAGNLLDVREGVTLDRAFVESAWGNDNPLIVEIGTGQGENVVAAAAAHPETNFLALEVYDPGVAHTLLLAGKQGLTNIRVAQVNAPELFKVTAAGTVAEVWTFFPDPWPKKKHHKRRIVQKAMAGDIHRALVTDGVWRIATDIEDYALHVHEVMDGLDGWKNLGSVTVSLPLEHVGKGNADMAADMPHADFTESERFEGRVLTNFEKKGLAAGRVIHDFTYQAVTLN</sequence>
<keyword id="KW-0489">Methyltransferase</keyword>
<keyword id="KW-1185">Reference proteome</keyword>
<keyword id="KW-0949">S-adenosyl-L-methionine</keyword>
<keyword id="KW-0808">Transferase</keyword>
<keyword id="KW-0819">tRNA processing</keyword>
<feature type="chain" id="PRO_0000171300" description="tRNA (guanine-N(7)-)-methyltransferase">
    <location>
        <begin position="1"/>
        <end position="286"/>
    </location>
</feature>
<feature type="region of interest" description="Disordered" evidence="3">
    <location>
        <begin position="1"/>
        <end position="21"/>
    </location>
</feature>
<feature type="active site" evidence="1">
    <location>
        <position position="165"/>
    </location>
</feature>
<feature type="binding site" evidence="2">
    <location>
        <position position="91"/>
    </location>
    <ligand>
        <name>S-adenosyl-L-methionine</name>
        <dbReference type="ChEBI" id="CHEBI:59789"/>
    </ligand>
</feature>
<feature type="binding site" evidence="2">
    <location>
        <position position="116"/>
    </location>
    <ligand>
        <name>S-adenosyl-L-methionine</name>
        <dbReference type="ChEBI" id="CHEBI:59789"/>
    </ligand>
</feature>
<feature type="binding site" evidence="2">
    <location>
        <position position="143"/>
    </location>
    <ligand>
        <name>S-adenosyl-L-methionine</name>
        <dbReference type="ChEBI" id="CHEBI:59789"/>
    </ligand>
</feature>
<feature type="binding site" evidence="2">
    <location>
        <position position="165"/>
    </location>
    <ligand>
        <name>S-adenosyl-L-methionine</name>
        <dbReference type="ChEBI" id="CHEBI:59789"/>
    </ligand>
</feature>
<feature type="binding site" evidence="2">
    <location>
        <position position="169"/>
    </location>
    <ligand>
        <name>substrate</name>
    </ligand>
</feature>
<feature type="binding site" evidence="2">
    <location>
        <position position="201"/>
    </location>
    <ligand>
        <name>substrate</name>
    </ligand>
</feature>
<feature type="binding site" evidence="2">
    <location>
        <begin position="262"/>
        <end position="265"/>
    </location>
    <ligand>
        <name>substrate</name>
    </ligand>
</feature>
<reference key="1">
    <citation type="journal article" date="2002" name="Proc. Natl. Acad. Sci. U.S.A.">
        <title>The genome sequence of Bifidobacterium longum reflects its adaptation to the human gastrointestinal tract.</title>
        <authorList>
            <person name="Schell M.A."/>
            <person name="Karmirantzou M."/>
            <person name="Snel B."/>
            <person name="Vilanova D."/>
            <person name="Berger B."/>
            <person name="Pessi G."/>
            <person name="Zwahlen M.-C."/>
            <person name="Desiere F."/>
            <person name="Bork P."/>
            <person name="Delley M."/>
            <person name="Pridmore R.D."/>
            <person name="Arigoni F."/>
        </authorList>
    </citation>
    <scope>NUCLEOTIDE SEQUENCE [LARGE SCALE GENOMIC DNA]</scope>
    <source>
        <strain>NCC 2705</strain>
    </source>
</reference>
<accession>Q8G3T4</accession>
<organism>
    <name type="scientific">Bifidobacterium longum (strain NCC 2705)</name>
    <dbReference type="NCBI Taxonomy" id="206672"/>
    <lineage>
        <taxon>Bacteria</taxon>
        <taxon>Bacillati</taxon>
        <taxon>Actinomycetota</taxon>
        <taxon>Actinomycetes</taxon>
        <taxon>Bifidobacteriales</taxon>
        <taxon>Bifidobacteriaceae</taxon>
        <taxon>Bifidobacterium</taxon>
    </lineage>
</organism>
<evidence type="ECO:0000250" key="1"/>
<evidence type="ECO:0000255" key="2">
    <source>
        <dbReference type="HAMAP-Rule" id="MF_01057"/>
    </source>
</evidence>
<evidence type="ECO:0000256" key="3">
    <source>
        <dbReference type="SAM" id="MobiDB-lite"/>
    </source>
</evidence>
<dbReference type="EC" id="2.1.1.33" evidence="2"/>
<dbReference type="EMBL" id="AE014295">
    <property type="protein sequence ID" value="AAN25457.1"/>
    <property type="molecule type" value="Genomic_DNA"/>
</dbReference>
<dbReference type="RefSeq" id="NP_696821.1">
    <property type="nucleotide sequence ID" value="NC_004307.2"/>
</dbReference>
<dbReference type="SMR" id="Q8G3T4"/>
<dbReference type="STRING" id="206672.BL1670"/>
<dbReference type="EnsemblBacteria" id="AAN25457">
    <property type="protein sequence ID" value="AAN25457"/>
    <property type="gene ID" value="BL1670"/>
</dbReference>
<dbReference type="KEGG" id="blo:BL1670"/>
<dbReference type="PATRIC" id="fig|206672.9.peg.1725"/>
<dbReference type="HOGENOM" id="CLU_050910_0_0_11"/>
<dbReference type="OrthoDB" id="9802090at2"/>
<dbReference type="PhylomeDB" id="Q8G3T4"/>
<dbReference type="UniPathway" id="UPA00989"/>
<dbReference type="Proteomes" id="UP000000439">
    <property type="component" value="Chromosome"/>
</dbReference>
<dbReference type="GO" id="GO:0043527">
    <property type="term" value="C:tRNA methyltransferase complex"/>
    <property type="evidence" value="ECO:0007669"/>
    <property type="project" value="TreeGrafter"/>
</dbReference>
<dbReference type="GO" id="GO:0008176">
    <property type="term" value="F:tRNA (guanine(46)-N7)-methyltransferase activity"/>
    <property type="evidence" value="ECO:0007669"/>
    <property type="project" value="UniProtKB-UniRule"/>
</dbReference>
<dbReference type="Gene3D" id="3.40.50.150">
    <property type="entry name" value="Vaccinia Virus protein VP39"/>
    <property type="match status" value="1"/>
</dbReference>
<dbReference type="HAMAP" id="MF_01057">
    <property type="entry name" value="tRNA_methyltr_TrmB"/>
    <property type="match status" value="1"/>
</dbReference>
<dbReference type="InterPro" id="IPR029063">
    <property type="entry name" value="SAM-dependent_MTases_sf"/>
</dbReference>
<dbReference type="InterPro" id="IPR003358">
    <property type="entry name" value="tRNA_(Gua-N-7)_MeTrfase_Trmb"/>
</dbReference>
<dbReference type="InterPro" id="IPR055361">
    <property type="entry name" value="tRNA_methyltr_TrmB_bact"/>
</dbReference>
<dbReference type="NCBIfam" id="TIGR00091">
    <property type="entry name" value="tRNA (guanosine(46)-N7)-methyltransferase TrmB"/>
    <property type="match status" value="1"/>
</dbReference>
<dbReference type="PANTHER" id="PTHR23417">
    <property type="entry name" value="3-DEOXY-D-MANNO-OCTULOSONIC-ACID TRANSFERASE/TRNA GUANINE-N 7 - -METHYLTRANSFERASE"/>
    <property type="match status" value="1"/>
</dbReference>
<dbReference type="PANTHER" id="PTHR23417:SF14">
    <property type="entry name" value="PENTACOTRIPEPTIDE-REPEAT REGION OF PRORP DOMAIN-CONTAINING PROTEIN"/>
    <property type="match status" value="1"/>
</dbReference>
<dbReference type="Pfam" id="PF02390">
    <property type="entry name" value="Methyltransf_4"/>
    <property type="match status" value="1"/>
</dbReference>
<dbReference type="SUPFAM" id="SSF53335">
    <property type="entry name" value="S-adenosyl-L-methionine-dependent methyltransferases"/>
    <property type="match status" value="1"/>
</dbReference>
<dbReference type="PROSITE" id="PS51625">
    <property type="entry name" value="SAM_MT_TRMB"/>
    <property type="match status" value="1"/>
</dbReference>
<protein>
    <recommendedName>
        <fullName evidence="2">tRNA (guanine-N(7)-)-methyltransferase</fullName>
        <ecNumber evidence="2">2.1.1.33</ecNumber>
    </recommendedName>
    <alternativeName>
        <fullName evidence="2">tRNA (guanine(46)-N(7))-methyltransferase</fullName>
    </alternativeName>
    <alternativeName>
        <fullName evidence="2">tRNA(m7G46)-methyltransferase</fullName>
    </alternativeName>
</protein>